<sequence>MDRTGIFAGDDPFAIAAGWLAEAEPQEPNDPNAIALATVDAAGLPNVRMVLLKEIEAEAFVFYTNYGSQKAVEIETSGKAAFVLHWKSLRRQIRVRGLVEREEGAQADAYYASRSLKSRLGAWASEQSRPLASRTSLLAEVARVTARFGTNPPRPAFWGGFRIRPLEIEFWADGAFRLHDRFRWRRNSLSDGWSIERLNP</sequence>
<protein>
    <recommendedName>
        <fullName evidence="1">Pyridoxine/pyridoxamine 5'-phosphate oxidase</fullName>
        <ecNumber evidence="1">1.4.3.5</ecNumber>
    </recommendedName>
    <alternativeName>
        <fullName evidence="1">PNP/PMP oxidase</fullName>
        <shortName evidence="1">PNPOx</shortName>
    </alternativeName>
    <alternativeName>
        <fullName evidence="1">Pyridoxal 5'-phosphate synthase</fullName>
    </alternativeName>
</protein>
<name>PDXH_CERS4</name>
<feature type="chain" id="PRO_0000255881" description="Pyridoxine/pyridoxamine 5'-phosphate oxidase">
    <location>
        <begin position="1"/>
        <end position="200"/>
    </location>
</feature>
<feature type="binding site" evidence="1">
    <location>
        <begin position="48"/>
        <end position="53"/>
    </location>
    <ligand>
        <name>FMN</name>
        <dbReference type="ChEBI" id="CHEBI:58210"/>
    </ligand>
</feature>
<feature type="binding site" evidence="1">
    <location>
        <position position="53"/>
    </location>
    <ligand>
        <name>substrate</name>
    </ligand>
</feature>
<feature type="binding site" evidence="1">
    <location>
        <begin position="63"/>
        <end position="64"/>
    </location>
    <ligand>
        <name>FMN</name>
        <dbReference type="ChEBI" id="CHEBI:58210"/>
    </ligand>
</feature>
<feature type="binding site" evidence="1">
    <location>
        <position position="70"/>
    </location>
    <ligand>
        <name>FMN</name>
        <dbReference type="ChEBI" id="CHEBI:58210"/>
    </ligand>
</feature>
<feature type="binding site" evidence="1">
    <location>
        <position position="92"/>
    </location>
    <ligand>
        <name>FMN</name>
        <dbReference type="ChEBI" id="CHEBI:58210"/>
    </ligand>
</feature>
<feature type="binding site" evidence="1">
    <location>
        <position position="110"/>
    </location>
    <ligand>
        <name>substrate</name>
    </ligand>
</feature>
<feature type="binding site" evidence="1">
    <location>
        <position position="114"/>
    </location>
    <ligand>
        <name>substrate</name>
    </ligand>
</feature>
<feature type="binding site" evidence="1">
    <location>
        <position position="118"/>
    </location>
    <ligand>
        <name>substrate</name>
    </ligand>
</feature>
<feature type="binding site" evidence="1">
    <location>
        <begin position="127"/>
        <end position="128"/>
    </location>
    <ligand>
        <name>FMN</name>
        <dbReference type="ChEBI" id="CHEBI:58210"/>
    </ligand>
</feature>
<feature type="binding site" evidence="1">
    <location>
        <position position="171"/>
    </location>
    <ligand>
        <name>FMN</name>
        <dbReference type="ChEBI" id="CHEBI:58210"/>
    </ligand>
</feature>
<feature type="binding site" evidence="1">
    <location>
        <begin position="177"/>
        <end position="179"/>
    </location>
    <ligand>
        <name>substrate</name>
    </ligand>
</feature>
<feature type="binding site" evidence="1">
    <location>
        <position position="181"/>
    </location>
    <ligand>
        <name>FMN</name>
        <dbReference type="ChEBI" id="CHEBI:58210"/>
    </ligand>
</feature>
<reference key="1">
    <citation type="submission" date="2005-09" db="EMBL/GenBank/DDBJ databases">
        <title>Complete sequence of chromosome 1 of Rhodobacter sphaeroides 2.4.1.</title>
        <authorList>
            <person name="Copeland A."/>
            <person name="Lucas S."/>
            <person name="Lapidus A."/>
            <person name="Barry K."/>
            <person name="Detter J.C."/>
            <person name="Glavina T."/>
            <person name="Hammon N."/>
            <person name="Israni S."/>
            <person name="Pitluck S."/>
            <person name="Richardson P."/>
            <person name="Mackenzie C."/>
            <person name="Choudhary M."/>
            <person name="Larimer F."/>
            <person name="Hauser L.J."/>
            <person name="Land M."/>
            <person name="Donohue T.J."/>
            <person name="Kaplan S."/>
        </authorList>
    </citation>
    <scope>NUCLEOTIDE SEQUENCE [LARGE SCALE GENOMIC DNA]</scope>
    <source>
        <strain>ATCC 17023 / DSM 158 / JCM 6121 / CCUG 31486 / LMG 2827 / NBRC 12203 / NCIMB 8253 / ATH 2.4.1.</strain>
    </source>
</reference>
<keyword id="KW-0285">Flavoprotein</keyword>
<keyword id="KW-0288">FMN</keyword>
<keyword id="KW-0560">Oxidoreductase</keyword>
<keyword id="KW-0664">Pyridoxine biosynthesis</keyword>
<keyword id="KW-1185">Reference proteome</keyword>
<proteinExistence type="inferred from homology"/>
<evidence type="ECO:0000255" key="1">
    <source>
        <dbReference type="HAMAP-Rule" id="MF_01629"/>
    </source>
</evidence>
<dbReference type="EC" id="1.4.3.5" evidence="1"/>
<dbReference type="EMBL" id="CP000143">
    <property type="protein sequence ID" value="ABA78501.1"/>
    <property type="molecule type" value="Genomic_DNA"/>
</dbReference>
<dbReference type="RefSeq" id="WP_011337412.1">
    <property type="nucleotide sequence ID" value="NZ_CP030271.1"/>
</dbReference>
<dbReference type="RefSeq" id="YP_352402.1">
    <property type="nucleotide sequence ID" value="NC_007493.2"/>
</dbReference>
<dbReference type="SMR" id="Q3J3Y3"/>
<dbReference type="STRING" id="272943.RSP_2345"/>
<dbReference type="EnsemblBacteria" id="ABA78501">
    <property type="protein sequence ID" value="ABA78501"/>
    <property type="gene ID" value="RSP_2345"/>
</dbReference>
<dbReference type="GeneID" id="67446118"/>
<dbReference type="KEGG" id="rsp:RSP_2345"/>
<dbReference type="PATRIC" id="fig|272943.9.peg.1259"/>
<dbReference type="eggNOG" id="COG0259">
    <property type="taxonomic scope" value="Bacteria"/>
</dbReference>
<dbReference type="OrthoDB" id="9780392at2"/>
<dbReference type="PhylomeDB" id="Q3J3Y3"/>
<dbReference type="UniPathway" id="UPA01068">
    <property type="reaction ID" value="UER00304"/>
</dbReference>
<dbReference type="UniPathway" id="UPA01068">
    <property type="reaction ID" value="UER00305"/>
</dbReference>
<dbReference type="Proteomes" id="UP000002703">
    <property type="component" value="Chromosome 1"/>
</dbReference>
<dbReference type="GO" id="GO:0010181">
    <property type="term" value="F:FMN binding"/>
    <property type="evidence" value="ECO:0007669"/>
    <property type="project" value="UniProtKB-UniRule"/>
</dbReference>
<dbReference type="GO" id="GO:0004733">
    <property type="term" value="F:pyridoxamine phosphate oxidase activity"/>
    <property type="evidence" value="ECO:0007669"/>
    <property type="project" value="UniProtKB-UniRule"/>
</dbReference>
<dbReference type="GO" id="GO:0008615">
    <property type="term" value="P:pyridoxine biosynthetic process"/>
    <property type="evidence" value="ECO:0007669"/>
    <property type="project" value="UniProtKB-KW"/>
</dbReference>
<dbReference type="Gene3D" id="2.30.110.10">
    <property type="entry name" value="Electron Transport, Fmn-binding Protein, Chain A"/>
    <property type="match status" value="1"/>
</dbReference>
<dbReference type="HAMAP" id="MF_01629">
    <property type="entry name" value="PdxH"/>
    <property type="match status" value="1"/>
</dbReference>
<dbReference type="InterPro" id="IPR000659">
    <property type="entry name" value="Pyridox_Oxase"/>
</dbReference>
<dbReference type="InterPro" id="IPR019740">
    <property type="entry name" value="Pyridox_Oxase_CS"/>
</dbReference>
<dbReference type="InterPro" id="IPR011576">
    <property type="entry name" value="Pyridox_Oxase_N"/>
</dbReference>
<dbReference type="InterPro" id="IPR019576">
    <property type="entry name" value="Pyridoxamine_oxidase_dimer_C"/>
</dbReference>
<dbReference type="InterPro" id="IPR012349">
    <property type="entry name" value="Split_barrel_FMN-bd"/>
</dbReference>
<dbReference type="NCBIfam" id="TIGR00558">
    <property type="entry name" value="pdxH"/>
    <property type="match status" value="1"/>
</dbReference>
<dbReference type="NCBIfam" id="NF004231">
    <property type="entry name" value="PRK05679.1"/>
    <property type="match status" value="1"/>
</dbReference>
<dbReference type="PANTHER" id="PTHR10851:SF0">
    <property type="entry name" value="PYRIDOXINE-5'-PHOSPHATE OXIDASE"/>
    <property type="match status" value="1"/>
</dbReference>
<dbReference type="PANTHER" id="PTHR10851">
    <property type="entry name" value="PYRIDOXINE-5-PHOSPHATE OXIDASE"/>
    <property type="match status" value="1"/>
</dbReference>
<dbReference type="Pfam" id="PF10590">
    <property type="entry name" value="PNP_phzG_C"/>
    <property type="match status" value="1"/>
</dbReference>
<dbReference type="Pfam" id="PF01243">
    <property type="entry name" value="PNPOx_N"/>
    <property type="match status" value="1"/>
</dbReference>
<dbReference type="PIRSF" id="PIRSF000190">
    <property type="entry name" value="Pyd_amn-ph_oxd"/>
    <property type="match status" value="1"/>
</dbReference>
<dbReference type="SUPFAM" id="SSF50475">
    <property type="entry name" value="FMN-binding split barrel"/>
    <property type="match status" value="1"/>
</dbReference>
<dbReference type="PROSITE" id="PS01064">
    <property type="entry name" value="PYRIDOX_OXIDASE"/>
    <property type="match status" value="1"/>
</dbReference>
<comment type="function">
    <text evidence="1">Catalyzes the oxidation of either pyridoxine 5'-phosphate (PNP) or pyridoxamine 5'-phosphate (PMP) into pyridoxal 5'-phosphate (PLP).</text>
</comment>
<comment type="catalytic activity">
    <reaction evidence="1">
        <text>pyridoxamine 5'-phosphate + O2 + H2O = pyridoxal 5'-phosphate + H2O2 + NH4(+)</text>
        <dbReference type="Rhea" id="RHEA:15817"/>
        <dbReference type="ChEBI" id="CHEBI:15377"/>
        <dbReference type="ChEBI" id="CHEBI:15379"/>
        <dbReference type="ChEBI" id="CHEBI:16240"/>
        <dbReference type="ChEBI" id="CHEBI:28938"/>
        <dbReference type="ChEBI" id="CHEBI:58451"/>
        <dbReference type="ChEBI" id="CHEBI:597326"/>
        <dbReference type="EC" id="1.4.3.5"/>
    </reaction>
</comment>
<comment type="catalytic activity">
    <reaction evidence="1">
        <text>pyridoxine 5'-phosphate + O2 = pyridoxal 5'-phosphate + H2O2</text>
        <dbReference type="Rhea" id="RHEA:15149"/>
        <dbReference type="ChEBI" id="CHEBI:15379"/>
        <dbReference type="ChEBI" id="CHEBI:16240"/>
        <dbReference type="ChEBI" id="CHEBI:58589"/>
        <dbReference type="ChEBI" id="CHEBI:597326"/>
        <dbReference type="EC" id="1.4.3.5"/>
    </reaction>
</comment>
<comment type="cofactor">
    <cofactor evidence="1">
        <name>FMN</name>
        <dbReference type="ChEBI" id="CHEBI:58210"/>
    </cofactor>
    <text evidence="1">Binds 1 FMN per subunit.</text>
</comment>
<comment type="pathway">
    <text evidence="1">Cofactor metabolism; pyridoxal 5'-phosphate salvage; pyridoxal 5'-phosphate from pyridoxamine 5'-phosphate: step 1/1.</text>
</comment>
<comment type="pathway">
    <text evidence="1">Cofactor metabolism; pyridoxal 5'-phosphate salvage; pyridoxal 5'-phosphate from pyridoxine 5'-phosphate: step 1/1.</text>
</comment>
<comment type="subunit">
    <text evidence="1">Homodimer.</text>
</comment>
<comment type="similarity">
    <text evidence="1">Belongs to the pyridoxamine 5'-phosphate oxidase family.</text>
</comment>
<accession>Q3J3Y3</accession>
<organism>
    <name type="scientific">Cereibacter sphaeroides (strain ATCC 17023 / DSM 158 / JCM 6121 / CCUG 31486 / LMG 2827 / NBRC 12203 / NCIMB 8253 / ATH 2.4.1.)</name>
    <name type="common">Rhodobacter sphaeroides</name>
    <dbReference type="NCBI Taxonomy" id="272943"/>
    <lineage>
        <taxon>Bacteria</taxon>
        <taxon>Pseudomonadati</taxon>
        <taxon>Pseudomonadota</taxon>
        <taxon>Alphaproteobacteria</taxon>
        <taxon>Rhodobacterales</taxon>
        <taxon>Paracoccaceae</taxon>
        <taxon>Cereibacter</taxon>
    </lineage>
</organism>
<gene>
    <name evidence="1" type="primary">pdxH</name>
    <name type="ordered locus">RHOS4_09330</name>
    <name type="ordered locus">RSP_2345</name>
</gene>